<evidence type="ECO:0000250" key="1"/>
<evidence type="ECO:0000256" key="2">
    <source>
        <dbReference type="SAM" id="MobiDB-lite"/>
    </source>
</evidence>
<evidence type="ECO:0000305" key="3"/>
<proteinExistence type="inferred from homology"/>
<reference key="1">
    <citation type="journal article" date="2005" name="Nature">
        <title>Genome sequencing and analysis of Aspergillus oryzae.</title>
        <authorList>
            <person name="Machida M."/>
            <person name="Asai K."/>
            <person name="Sano M."/>
            <person name="Tanaka T."/>
            <person name="Kumagai T."/>
            <person name="Terai G."/>
            <person name="Kusumoto K."/>
            <person name="Arima T."/>
            <person name="Akita O."/>
            <person name="Kashiwagi Y."/>
            <person name="Abe K."/>
            <person name="Gomi K."/>
            <person name="Horiuchi H."/>
            <person name="Kitamoto K."/>
            <person name="Kobayashi T."/>
            <person name="Takeuchi M."/>
            <person name="Denning D.W."/>
            <person name="Galagan J.E."/>
            <person name="Nierman W.C."/>
            <person name="Yu J."/>
            <person name="Archer D.B."/>
            <person name="Bennett J.W."/>
            <person name="Bhatnagar D."/>
            <person name="Cleveland T.E."/>
            <person name="Fedorova N.D."/>
            <person name="Gotoh O."/>
            <person name="Horikawa H."/>
            <person name="Hosoyama A."/>
            <person name="Ichinomiya M."/>
            <person name="Igarashi R."/>
            <person name="Iwashita K."/>
            <person name="Juvvadi P.R."/>
            <person name="Kato M."/>
            <person name="Kato Y."/>
            <person name="Kin T."/>
            <person name="Kokubun A."/>
            <person name="Maeda H."/>
            <person name="Maeyama N."/>
            <person name="Maruyama J."/>
            <person name="Nagasaki H."/>
            <person name="Nakajima T."/>
            <person name="Oda K."/>
            <person name="Okada K."/>
            <person name="Paulsen I."/>
            <person name="Sakamoto K."/>
            <person name="Sawano T."/>
            <person name="Takahashi M."/>
            <person name="Takase K."/>
            <person name="Terabayashi Y."/>
            <person name="Wortman J.R."/>
            <person name="Yamada O."/>
            <person name="Yamagata Y."/>
            <person name="Anazawa H."/>
            <person name="Hata Y."/>
            <person name="Koide Y."/>
            <person name="Komori T."/>
            <person name="Koyama Y."/>
            <person name="Minetoki T."/>
            <person name="Suharnan S."/>
            <person name="Tanaka A."/>
            <person name="Isono K."/>
            <person name="Kuhara S."/>
            <person name="Ogasawara N."/>
            <person name="Kikuchi H."/>
        </authorList>
    </citation>
    <scope>NUCLEOTIDE SEQUENCE [LARGE SCALE GENOMIC DNA]</scope>
    <source>
        <strain>ATCC 42149 / RIB 40</strain>
    </source>
</reference>
<feature type="chain" id="PRO_0000278430" description="DNA replication regulator sld2">
    <location>
        <begin position="1"/>
        <end position="527"/>
    </location>
</feature>
<feature type="region of interest" description="Disordered" evidence="2">
    <location>
        <begin position="60"/>
        <end position="226"/>
    </location>
</feature>
<feature type="region of interest" description="Disordered" evidence="2">
    <location>
        <begin position="244"/>
        <end position="303"/>
    </location>
</feature>
<feature type="region of interest" description="Disordered" evidence="2">
    <location>
        <begin position="340"/>
        <end position="527"/>
    </location>
</feature>
<feature type="compositionally biased region" description="Basic and acidic residues" evidence="2">
    <location>
        <begin position="60"/>
        <end position="70"/>
    </location>
</feature>
<feature type="compositionally biased region" description="Polar residues" evidence="2">
    <location>
        <begin position="136"/>
        <end position="147"/>
    </location>
</feature>
<feature type="compositionally biased region" description="Low complexity" evidence="2">
    <location>
        <begin position="180"/>
        <end position="191"/>
    </location>
</feature>
<feature type="compositionally biased region" description="Basic and acidic residues" evidence="2">
    <location>
        <begin position="246"/>
        <end position="255"/>
    </location>
</feature>
<feature type="compositionally biased region" description="Polar residues" evidence="2">
    <location>
        <begin position="279"/>
        <end position="291"/>
    </location>
</feature>
<feature type="compositionally biased region" description="Polar residues" evidence="2">
    <location>
        <begin position="342"/>
        <end position="358"/>
    </location>
</feature>
<feature type="compositionally biased region" description="Basic residues" evidence="2">
    <location>
        <begin position="361"/>
        <end position="375"/>
    </location>
</feature>
<feature type="compositionally biased region" description="Acidic residues" evidence="2">
    <location>
        <begin position="391"/>
        <end position="407"/>
    </location>
</feature>
<feature type="compositionally biased region" description="Acidic residues" evidence="2">
    <location>
        <begin position="438"/>
        <end position="447"/>
    </location>
</feature>
<feature type="compositionally biased region" description="Basic and acidic residues" evidence="2">
    <location>
        <begin position="474"/>
        <end position="499"/>
    </location>
</feature>
<feature type="compositionally biased region" description="Gly residues" evidence="2">
    <location>
        <begin position="518"/>
        <end position="527"/>
    </location>
</feature>
<name>SLD2_ASPOR</name>
<dbReference type="EMBL" id="BA000049">
    <property type="protein sequence ID" value="BAE56268.1"/>
    <property type="molecule type" value="Genomic_DNA"/>
</dbReference>
<dbReference type="SMR" id="Q2UQ97"/>
<dbReference type="STRING" id="510516.Q2UQ97"/>
<dbReference type="EnsemblFungi" id="BAE56268">
    <property type="protein sequence ID" value="BAE56268"/>
    <property type="gene ID" value="AO090005001340"/>
</dbReference>
<dbReference type="VEuPathDB" id="FungiDB:AO090005001340"/>
<dbReference type="HOGENOM" id="CLU_033089_0_0_1"/>
<dbReference type="OMA" id="AVRMPQK"/>
<dbReference type="Proteomes" id="UP000006564">
    <property type="component" value="Chromosome 1"/>
</dbReference>
<dbReference type="GO" id="GO:0005737">
    <property type="term" value="C:cytoplasm"/>
    <property type="evidence" value="ECO:0007669"/>
    <property type="project" value="UniProtKB-SubCell"/>
</dbReference>
<dbReference type="GO" id="GO:0031261">
    <property type="term" value="C:DNA replication preinitiation complex"/>
    <property type="evidence" value="ECO:0007669"/>
    <property type="project" value="TreeGrafter"/>
</dbReference>
<dbReference type="GO" id="GO:0003688">
    <property type="term" value="F:DNA replication origin binding"/>
    <property type="evidence" value="ECO:0007669"/>
    <property type="project" value="TreeGrafter"/>
</dbReference>
<dbReference type="GO" id="GO:0003697">
    <property type="term" value="F:single-stranded DNA binding"/>
    <property type="evidence" value="ECO:0007669"/>
    <property type="project" value="TreeGrafter"/>
</dbReference>
<dbReference type="GO" id="GO:0006270">
    <property type="term" value="P:DNA replication initiation"/>
    <property type="evidence" value="ECO:0007669"/>
    <property type="project" value="InterPro"/>
</dbReference>
<dbReference type="GO" id="GO:0000727">
    <property type="term" value="P:double-strand break repair via break-induced replication"/>
    <property type="evidence" value="ECO:0007669"/>
    <property type="project" value="TreeGrafter"/>
</dbReference>
<dbReference type="GO" id="GO:1902977">
    <property type="term" value="P:mitotic DNA replication preinitiation complex assembly"/>
    <property type="evidence" value="ECO:0007669"/>
    <property type="project" value="TreeGrafter"/>
</dbReference>
<dbReference type="CDD" id="cd22289">
    <property type="entry name" value="RecQL4_SLD2_NTD"/>
    <property type="match status" value="1"/>
</dbReference>
<dbReference type="FunFam" id="1.10.10.1460:FF:000001">
    <property type="entry name" value="DNA replication regulator Sld2"/>
    <property type="match status" value="1"/>
</dbReference>
<dbReference type="Gene3D" id="1.10.10.1460">
    <property type="match status" value="1"/>
</dbReference>
<dbReference type="InterPro" id="IPR021110">
    <property type="entry name" value="DNA_rep_checkpnt_protein"/>
</dbReference>
<dbReference type="InterPro" id="IPR040203">
    <property type="entry name" value="Sld2"/>
</dbReference>
<dbReference type="PANTHER" id="PTHR28124">
    <property type="entry name" value="DNA REPLICATION REGULATOR SLD2"/>
    <property type="match status" value="1"/>
</dbReference>
<dbReference type="PANTHER" id="PTHR28124:SF1">
    <property type="entry name" value="DNA REPLICATION REGULATOR SLD2"/>
    <property type="match status" value="1"/>
</dbReference>
<dbReference type="Pfam" id="PF11719">
    <property type="entry name" value="Drc1-Sld2"/>
    <property type="match status" value="1"/>
</dbReference>
<accession>Q2UQ97</accession>
<comment type="function">
    <text evidence="1">Has a role in the initiation of DNA replication. Required at S-phase checkpoint (By similarity).</text>
</comment>
<comment type="subcellular location">
    <subcellularLocation>
        <location>Cytoplasm</location>
    </subcellularLocation>
    <subcellularLocation>
        <location evidence="1">Nucleus</location>
    </subcellularLocation>
</comment>
<comment type="similarity">
    <text evidence="3">Belongs to the SLD2 family.</text>
</comment>
<gene>
    <name type="primary">sld2</name>
    <name type="ORF">AO090005001340</name>
</gene>
<organism>
    <name type="scientific">Aspergillus oryzae (strain ATCC 42149 / RIB 40)</name>
    <name type="common">Yellow koji mold</name>
    <dbReference type="NCBI Taxonomy" id="510516"/>
    <lineage>
        <taxon>Eukaryota</taxon>
        <taxon>Fungi</taxon>
        <taxon>Dikarya</taxon>
        <taxon>Ascomycota</taxon>
        <taxon>Pezizomycotina</taxon>
        <taxon>Eurotiomycetes</taxon>
        <taxon>Eurotiomycetidae</taxon>
        <taxon>Eurotiales</taxon>
        <taxon>Aspergillaceae</taxon>
        <taxon>Aspergillus</taxon>
        <taxon>Aspergillus subgen. Circumdati</taxon>
    </lineage>
</organism>
<keyword id="KW-0131">Cell cycle</keyword>
<keyword id="KW-0963">Cytoplasm</keyword>
<keyword id="KW-0235">DNA replication</keyword>
<keyword id="KW-0539">Nucleus</keyword>
<keyword id="KW-1185">Reference proteome</keyword>
<protein>
    <recommendedName>
        <fullName>DNA replication regulator sld2</fullName>
    </recommendedName>
</protein>
<sequence length="527" mass="57971">MASLDVSDIAAQSAQLRAELKEWERAFAAANEGRKAERSDIKQAPEIAAKYKEYSRLKSLEKSVRYEKKHNPNSVNLEERPKKRKHASPPGSHEARLESTPRKAAKGPFTTPSKPRGHPSEFDPYDSPSALRRLFSPSTHQQSSSPLKTAIGPTPQRDGKALGLFDLLSESGGSTATPTAARLASVRGAAAQTPSKRKTLDTIAEEEEEEDGPRGDRTPASASKSYMLSALFATPTTWRYATMMDNRNDAIRREPSPQPSANDAGQGAPESETPAFLRRSNSARYAASNPNGEGLSPINVRKRPRFVGKGLSALVQGLRDMEEEHLDNELDVLREIEAEQAGMNTEATDSQAVEQDTVPTFKKKGQKRTTRRVRMKPVISKPKCESQLPASEDEDNTDNVDQSDDELAAVPETQQPGASGDETNGVPDAASLHSISEPELDSDSDYEEQSKPPARSKSFSERIRDAIGVVEPPPAEKQEKPQPKVKEKQTKPRERKVNPEAHANYRSLKLRNKNSKGRGAGRFGRRR</sequence>